<comment type="function">
    <text evidence="1">Required for selection of future bud sites. Cooperates with other bud site selection proteins to recognize a spatial landmark during mitosis and they subsequently become a landmark for downstream polarity establishment factors that coordinate budding and cytokinesis. Involved in the septin organization at the bud neck (By similarity).</text>
</comment>
<comment type="subcellular location">
    <subcellularLocation>
        <location>Bud neck</location>
    </subcellularLocation>
    <text evidence="1">Localizes to two distinct rings on either side of the mother-bud neck.</text>
</comment>
<comment type="similarity">
    <text evidence="4">Belongs to the BUD4 family.</text>
</comment>
<keyword id="KW-0131">Cell cycle</keyword>
<keyword id="KW-0132">Cell division</keyword>
<keyword id="KW-1185">Reference proteome</keyword>
<accession>A7TM88</accession>
<dbReference type="EMBL" id="DS480421">
    <property type="protein sequence ID" value="EDO16582.1"/>
    <property type="molecule type" value="Genomic_DNA"/>
</dbReference>
<dbReference type="RefSeq" id="XP_001644440.1">
    <property type="nucleotide sequence ID" value="XM_001644390.1"/>
</dbReference>
<dbReference type="FunCoup" id="A7TM88">
    <property type="interactions" value="197"/>
</dbReference>
<dbReference type="STRING" id="436907.A7TM88"/>
<dbReference type="GeneID" id="5544742"/>
<dbReference type="KEGG" id="vpo:Kpol_520p2"/>
<dbReference type="eggNOG" id="ENOG502REBM">
    <property type="taxonomic scope" value="Eukaryota"/>
</dbReference>
<dbReference type="HOGENOM" id="CLU_004727_0_0_1"/>
<dbReference type="InParanoid" id="A7TM88"/>
<dbReference type="OMA" id="MLVKHNT"/>
<dbReference type="OrthoDB" id="2123378at2759"/>
<dbReference type="PhylomeDB" id="A7TM88"/>
<dbReference type="Proteomes" id="UP000000267">
    <property type="component" value="Unassembled WGS sequence"/>
</dbReference>
<dbReference type="GO" id="GO:0000142">
    <property type="term" value="C:cellular bud neck contractile ring"/>
    <property type="evidence" value="ECO:0007669"/>
    <property type="project" value="TreeGrafter"/>
</dbReference>
<dbReference type="GO" id="GO:0005525">
    <property type="term" value="F:GTP binding"/>
    <property type="evidence" value="ECO:0007669"/>
    <property type="project" value="TreeGrafter"/>
</dbReference>
<dbReference type="GO" id="GO:0007120">
    <property type="term" value="P:axial cellular bud site selection"/>
    <property type="evidence" value="ECO:0007669"/>
    <property type="project" value="TreeGrafter"/>
</dbReference>
<dbReference type="GO" id="GO:0097271">
    <property type="term" value="P:protein localization to bud neck"/>
    <property type="evidence" value="ECO:0007669"/>
    <property type="project" value="TreeGrafter"/>
</dbReference>
<dbReference type="CDD" id="cd13278">
    <property type="entry name" value="PH_Bud4"/>
    <property type="match status" value="1"/>
</dbReference>
<dbReference type="Gene3D" id="2.30.29.30">
    <property type="entry name" value="Pleckstrin-homology domain (PH domain)/Phosphotyrosine-binding domain (PTB)"/>
    <property type="match status" value="1"/>
</dbReference>
<dbReference type="InterPro" id="IPR052007">
    <property type="entry name" value="Bud4"/>
</dbReference>
<dbReference type="InterPro" id="IPR011993">
    <property type="entry name" value="PH-like_dom_sf"/>
</dbReference>
<dbReference type="InterPro" id="IPR001849">
    <property type="entry name" value="PH_domain"/>
</dbReference>
<dbReference type="PANTHER" id="PTHR36100">
    <property type="entry name" value="BUD SITE SELECTION PROTEIN 4"/>
    <property type="match status" value="1"/>
</dbReference>
<dbReference type="PANTHER" id="PTHR36100:SF1">
    <property type="entry name" value="BUD SITE SELECTION PROTEIN 4"/>
    <property type="match status" value="1"/>
</dbReference>
<dbReference type="SMART" id="SM00233">
    <property type="entry name" value="PH"/>
    <property type="match status" value="1"/>
</dbReference>
<dbReference type="SUPFAM" id="SSF50729">
    <property type="entry name" value="PH domain-like"/>
    <property type="match status" value="1"/>
</dbReference>
<dbReference type="PROSITE" id="PS50003">
    <property type="entry name" value="PH_DOMAIN"/>
    <property type="match status" value="1"/>
</dbReference>
<feature type="chain" id="PRO_0000330082" description="Bud site selection protein 4">
    <location>
        <begin position="1"/>
        <end position="1378"/>
    </location>
</feature>
<feature type="domain" description="PH" evidence="2">
    <location>
        <begin position="1240"/>
        <end position="1357"/>
    </location>
</feature>
<feature type="region of interest" description="Disordered" evidence="3">
    <location>
        <begin position="71"/>
        <end position="95"/>
    </location>
</feature>
<feature type="region of interest" description="Disordered" evidence="3">
    <location>
        <begin position="361"/>
        <end position="441"/>
    </location>
</feature>
<feature type="region of interest" description="Disordered" evidence="3">
    <location>
        <begin position="458"/>
        <end position="480"/>
    </location>
</feature>
<feature type="compositionally biased region" description="Basic and acidic residues" evidence="3">
    <location>
        <begin position="361"/>
        <end position="378"/>
    </location>
</feature>
<feature type="compositionally biased region" description="Low complexity" evidence="3">
    <location>
        <begin position="406"/>
        <end position="415"/>
    </location>
</feature>
<feature type="compositionally biased region" description="Basic and acidic residues" evidence="3">
    <location>
        <begin position="420"/>
        <end position="430"/>
    </location>
</feature>
<feature type="compositionally biased region" description="Polar residues" evidence="3">
    <location>
        <begin position="431"/>
        <end position="441"/>
    </location>
</feature>
<feature type="compositionally biased region" description="Basic and acidic residues" evidence="3">
    <location>
        <begin position="470"/>
        <end position="480"/>
    </location>
</feature>
<protein>
    <recommendedName>
        <fullName>Bud site selection protein 4</fullName>
    </recommendedName>
</protein>
<reference key="1">
    <citation type="journal article" date="2007" name="Proc. Natl. Acad. Sci. U.S.A.">
        <title>Independent sorting-out of thousands of duplicated gene pairs in two yeast species descended from a whole-genome duplication.</title>
        <authorList>
            <person name="Scannell D.R."/>
            <person name="Frank A.C."/>
            <person name="Conant G.C."/>
            <person name="Byrne K.P."/>
            <person name="Woolfit M."/>
            <person name="Wolfe K.H."/>
        </authorList>
    </citation>
    <scope>NUCLEOTIDE SEQUENCE [LARGE SCALE GENOMIC DNA]</scope>
    <source>
        <strain>ATCC 22028 / DSM 70294 / BCRC 21397 / CBS 2163 / NBRC 10782 / NRRL Y-8283 / UCD 57-17</strain>
    </source>
</reference>
<gene>
    <name type="primary">BUD4</name>
    <name type="ORF">Kpol_520p2</name>
</gene>
<name>BUD4_VANPO</name>
<proteinExistence type="inferred from homology"/>
<evidence type="ECO:0000250" key="1"/>
<evidence type="ECO:0000255" key="2">
    <source>
        <dbReference type="PROSITE-ProRule" id="PRU00145"/>
    </source>
</evidence>
<evidence type="ECO:0000256" key="3">
    <source>
        <dbReference type="SAM" id="MobiDB-lite"/>
    </source>
</evidence>
<evidence type="ECO:0000305" key="4"/>
<sequence>MIPNDAEGAMDSLLKEIDHEMEVTIGTIDAQEDHSKQKEETEATNQQTWKLPLQDIGDETMDMLVKHNTKNNVINPNFNKKDVDTNESPKNNNDKNVVFNDNVQLLELSANMDESVLMSTPTKSDIDISPNKVLINLGDDIANESNEDNKLPLDNKTESEDSDLVSTMLLSKIPITHTENINDFYEKKSTDIRASTSRISSVSSDIEGTPLPTTVQTDQFELLKQAMKQTFEEDNNSNIDISPLKESLLSSELKTKQNLSIEQNEETSVDSIDNSVIHNSEYEVHARSNEREEENENDFENSIEDLEISTHVIEKSPSIEAISTLDPNTDNNKEHFIINNITKDSTFIEVTSDSKIQIDLKDSPENTLHTNEDQKEANTENVASETNIKETDQVIHIPTLTEEEISTITNITNDTETTEEGSKAEEDAKNSDVSNSQNSESINTTITNSLIGIDQNLTNKSSDITNDYEEPPKENELKSSPDVIEKGHSSIEHFDDEKITNSSALGTSNYISIPLDTLQEATPVTDSGKTFELQNQDSDNINSERIQNLNGSTPVEEKFNADDELLKTNQSHITQNKDKSNINEIDNSGTTSIVSDHVVAPILPPLPKIDKIFIDDPFGEEYDISNDSIDLTKSTRPGDYLSIWHIQEEELKQVSPASTTNSQFSNRILSNASSNASAESRISSTAFKFKPRIVSRSRYINPESRVNSFNISEEMILPQLYGALDPMRRSSRMSRTIQNSIKANRQKSEQYAGTRKYSIEIQPNQESRISSRIISNKLEEVSSENDKVETMNNSITMDGSFQLLPSFLDNSFGEQLDLTFSKFAKDVLSLRSSSLAQSEIHDNSINIWGEDNFIGNTSKNNDHNAMLDSKNKLLEVTDDEKSISESINKDIFADGILKSSIFNDITVSRGLNINGLDVDLSDSESVRVSLLTAETDASESGTPIKNTVKDSHVSSPFKVVNISKWKNQDGPESDHEVEEIAEIQIEAEKSSESIADISPIKMKPFVDTVVIEEPSQTALVDAGSLYLKLKGCLNIKLTGIKHHDARYCFEFDNGRNSIQTAWAVIPSDGDIRVNHDFESTVFEVGSKLYVTLKCKYTPPKTEIVEVVEKVLIPKKKLFGKAEYKYEKRFVQRDSKKDEWNNLFARDGSFGRAEVLLDHTFLNSVKYNKRNCTFDMMNEWTRLNDKENIENVFNIPRKPKYKVADLKMEVCYLDRVSNKEVFPVSFDKCEMIIKKYKEQLLISKEGYLMQEGGDVCNNLVRRFFKLQGTDLIGYHEVSNLPVVTINMLKVIDVVSSDDLKEEEGKQRSGNSKRNFTDHVLFGGCIQLVFTDEEVINLYADTSAQEKIEWYSKLKKTVDLNICHQPWVTKLAEAQKLEEC</sequence>
<organism>
    <name type="scientific">Vanderwaltozyma polyspora (strain ATCC 22028 / DSM 70294 / BCRC 21397 / CBS 2163 / NBRC 10782 / NRRL Y-8283 / UCD 57-17)</name>
    <name type="common">Kluyveromyces polysporus</name>
    <dbReference type="NCBI Taxonomy" id="436907"/>
    <lineage>
        <taxon>Eukaryota</taxon>
        <taxon>Fungi</taxon>
        <taxon>Dikarya</taxon>
        <taxon>Ascomycota</taxon>
        <taxon>Saccharomycotina</taxon>
        <taxon>Saccharomycetes</taxon>
        <taxon>Saccharomycetales</taxon>
        <taxon>Saccharomycetaceae</taxon>
        <taxon>Vanderwaltozyma</taxon>
    </lineage>
</organism>